<feature type="chain" id="PRO_0000385379" description="Putative glycosyltransferase 63">
    <location>
        <begin position="1"/>
        <end position="267"/>
    </location>
</feature>
<proteinExistence type="inferred from homology"/>
<organism>
    <name type="scientific">Sulfolobus islandicus filamentous virus (isolate Iceland/Hveragerdi)</name>
    <name type="common">SIFV</name>
    <dbReference type="NCBI Taxonomy" id="654908"/>
    <lineage>
        <taxon>Viruses</taxon>
        <taxon>Adnaviria</taxon>
        <taxon>Zilligvirae</taxon>
        <taxon>Taleaviricota</taxon>
        <taxon>Tokiviricetes</taxon>
        <taxon>Ligamenvirales</taxon>
        <taxon>Lipothrixviridae</taxon>
        <taxon>Betalipothrixvirus</taxon>
        <taxon>Sulfolobus islandicus filamentous virus</taxon>
    </lineage>
</organism>
<accession>Q914G9</accession>
<protein>
    <recommendedName>
        <fullName>Putative glycosyltransferase 63</fullName>
        <ecNumber>2.4.-.-</ecNumber>
    </recommendedName>
</protein>
<evidence type="ECO:0000305" key="1"/>
<organismHost>
    <name type="scientific">Saccharolobus islandicus</name>
    <name type="common">Sulfolobus islandicus</name>
    <dbReference type="NCBI Taxonomy" id="43080"/>
</organismHost>
<reference key="1">
    <citation type="journal article" date="2000" name="Virology">
        <title>A novel lipothrixvirus, SIFV, of the extremely thermophilic crenarchaeon Sulfolobus.</title>
        <authorList>
            <person name="Arnold H.P."/>
            <person name="Zillig W."/>
            <person name="Ziese U."/>
            <person name="Holz I."/>
            <person name="Crosby M."/>
            <person name="Utterback T."/>
            <person name="Weidmann J.F."/>
            <person name="Umayam L.A."/>
            <person name="Teffera K."/>
            <person name="Kristjanson J.K."/>
            <person name="Klenk H.P."/>
            <person name="Nelson K.E."/>
            <person name="Fraser C.M."/>
        </authorList>
    </citation>
    <scope>NUCLEOTIDE SEQUENCE [GENOMIC DNA]</scope>
</reference>
<keyword id="KW-0328">Glycosyltransferase</keyword>
<keyword id="KW-1185">Reference proteome</keyword>
<keyword id="KW-0808">Transferase</keyword>
<name>GT063_SIFVH</name>
<comment type="similarity">
    <text evidence="1">Belongs to the glycosyltransferase group 1 family. Glycosyltransferase 4 subfamily.</text>
</comment>
<sequence>MGYMVKLIYTQCKNCGYEWVVDQTIYYMKKYHDMVLTKTYFKPARFYVGDCNTIFNIAYDGIAWCDTPNNIVTKPSNSLKVITTSIWLKEHMEKKGIYVEQVIPRGINDEMAKKHVNFDFNARRGYVIIARNLPYKRIDNTLKMFEGKRKELTLISDHSNADFDFFSLSEDVKYYLLSHALFYIAVSDAEGFSIPPVEAMSVGTPLIYIKKHTYKEYGCGIEMDSIEDLRKIEISKEEWEDLSYKCWYKSLRYHYITVGQELWDWFK</sequence>
<dbReference type="EC" id="2.4.-.-"/>
<dbReference type="EMBL" id="AF440571">
    <property type="protein sequence ID" value="AAL27772.1"/>
    <property type="molecule type" value="Genomic_DNA"/>
</dbReference>
<dbReference type="RefSeq" id="NP_445726.1">
    <property type="nucleotide sequence ID" value="NC_003214.2"/>
</dbReference>
<dbReference type="SMR" id="Q914G9"/>
<dbReference type="CAZy" id="GT4">
    <property type="family name" value="Glycosyltransferase Family 4"/>
</dbReference>
<dbReference type="GeneID" id="922301"/>
<dbReference type="KEGG" id="vg:922301"/>
<dbReference type="Proteomes" id="UP000007017">
    <property type="component" value="Segment"/>
</dbReference>
<dbReference type="GO" id="GO:0016757">
    <property type="term" value="F:glycosyltransferase activity"/>
    <property type="evidence" value="ECO:0007669"/>
    <property type="project" value="UniProtKB-KW"/>
</dbReference>
<dbReference type="Gene3D" id="3.40.50.2000">
    <property type="entry name" value="Glycogen Phosphorylase B"/>
    <property type="match status" value="1"/>
</dbReference>
<dbReference type="SUPFAM" id="SSF53756">
    <property type="entry name" value="UDP-Glycosyltransferase/glycogen phosphorylase"/>
    <property type="match status" value="1"/>
</dbReference>
<gene>
    <name type="primary">SIFV0063</name>
</gene>